<keyword id="KW-0997">Cell inner membrane</keyword>
<keyword id="KW-1003">Cell membrane</keyword>
<keyword id="KW-0407">Ion channel</keyword>
<keyword id="KW-0406">Ion transport</keyword>
<keyword id="KW-0472">Membrane</keyword>
<keyword id="KW-0479">Metal-binding</keyword>
<keyword id="KW-0915">Sodium</keyword>
<keyword id="KW-0812">Transmembrane</keyword>
<keyword id="KW-1133">Transmembrane helix</keyword>
<keyword id="KW-0813">Transport</keyword>
<reference key="1">
    <citation type="journal article" date="2002" name="Proc. Natl. Acad. Sci. U.S.A.">
        <title>The Brucella suis genome reveals fundamental similarities between animal and plant pathogens and symbionts.</title>
        <authorList>
            <person name="Paulsen I.T."/>
            <person name="Seshadri R."/>
            <person name="Nelson K.E."/>
            <person name="Eisen J.A."/>
            <person name="Heidelberg J.F."/>
            <person name="Read T.D."/>
            <person name="Dodson R.J."/>
            <person name="Umayam L.A."/>
            <person name="Brinkac L.M."/>
            <person name="Beanan M.J."/>
            <person name="Daugherty S.C."/>
            <person name="DeBoy R.T."/>
            <person name="Durkin A.S."/>
            <person name="Kolonay J.F."/>
            <person name="Madupu R."/>
            <person name="Nelson W.C."/>
            <person name="Ayodeji B."/>
            <person name="Kraul M."/>
            <person name="Shetty J."/>
            <person name="Malek J.A."/>
            <person name="Van Aken S.E."/>
            <person name="Riedmuller S."/>
            <person name="Tettelin H."/>
            <person name="Gill S.R."/>
            <person name="White O."/>
            <person name="Salzberg S.L."/>
            <person name="Hoover D.L."/>
            <person name="Lindler L.E."/>
            <person name="Halling S.M."/>
            <person name="Boyle S.M."/>
            <person name="Fraser C.M."/>
        </authorList>
    </citation>
    <scope>NUCLEOTIDE SEQUENCE [LARGE SCALE GENOMIC DNA]</scope>
    <source>
        <strain>1330</strain>
    </source>
</reference>
<reference key="2">
    <citation type="journal article" date="2011" name="J. Bacteriol.">
        <title>Revised genome sequence of Brucella suis 1330.</title>
        <authorList>
            <person name="Tae H."/>
            <person name="Shallom S."/>
            <person name="Settlage R."/>
            <person name="Preston D."/>
            <person name="Adams L.G."/>
            <person name="Garner H.R."/>
        </authorList>
    </citation>
    <scope>NUCLEOTIDE SEQUENCE [LARGE SCALE GENOMIC DNA]</scope>
    <source>
        <strain>1330</strain>
    </source>
</reference>
<gene>
    <name evidence="1" type="primary">fluC3</name>
    <name evidence="1" type="synonym">crcB3</name>
    <name type="ordered locus">BRA0817</name>
    <name type="ordered locus">BS1330_II0810</name>
</gene>
<name>FLUC3_BRUSU</name>
<feature type="chain" id="PRO_0000110077" description="Fluoride-specific ion channel FluC 3">
    <location>
        <begin position="1"/>
        <end position="133"/>
    </location>
</feature>
<feature type="transmembrane region" description="Helical" evidence="1">
    <location>
        <begin position="7"/>
        <end position="27"/>
    </location>
</feature>
<feature type="transmembrane region" description="Helical" evidence="1">
    <location>
        <begin position="37"/>
        <end position="57"/>
    </location>
</feature>
<feature type="transmembrane region" description="Helical" evidence="1">
    <location>
        <begin position="60"/>
        <end position="80"/>
    </location>
</feature>
<feature type="transmembrane region" description="Helical" evidence="1">
    <location>
        <begin position="107"/>
        <end position="127"/>
    </location>
</feature>
<feature type="binding site" evidence="1">
    <location>
        <position position="79"/>
    </location>
    <ligand>
        <name>Na(+)</name>
        <dbReference type="ChEBI" id="CHEBI:29101"/>
        <note>structural</note>
    </ligand>
</feature>
<feature type="binding site" evidence="1">
    <location>
        <position position="82"/>
    </location>
    <ligand>
        <name>Na(+)</name>
        <dbReference type="ChEBI" id="CHEBI:29101"/>
        <note>structural</note>
    </ligand>
</feature>
<comment type="function">
    <text evidence="1">Fluoride-specific ion channel. Important for reducing fluoride concentration in the cell, thus reducing its toxicity.</text>
</comment>
<comment type="catalytic activity">
    <reaction evidence="1">
        <text>fluoride(in) = fluoride(out)</text>
        <dbReference type="Rhea" id="RHEA:76159"/>
        <dbReference type="ChEBI" id="CHEBI:17051"/>
    </reaction>
    <physiologicalReaction direction="left-to-right" evidence="1">
        <dbReference type="Rhea" id="RHEA:76160"/>
    </physiologicalReaction>
</comment>
<comment type="activity regulation">
    <text evidence="1">Na(+) is not transported, but it plays an essential structural role and its presence is essential for fluoride channel function.</text>
</comment>
<comment type="subcellular location">
    <subcellularLocation>
        <location evidence="1">Cell inner membrane</location>
        <topology evidence="1">Multi-pass membrane protein</topology>
    </subcellularLocation>
</comment>
<comment type="similarity">
    <text evidence="1">Belongs to the fluoride channel Fluc/FEX (TC 1.A.43) family.</text>
</comment>
<sequence>MSVEASILVLVGGFIGGVMRFFLSGYVGRRIGETFPWGTFVVNVSGAFVIGTAAGLGARLGAIFSTTIFHEFIMVGLLGGYTTVSSFCLQSVNLMLDGEQRQALFNIVASALLCVLAVAAGYGGIMWIMEWPG</sequence>
<protein>
    <recommendedName>
        <fullName evidence="1">Fluoride-specific ion channel FluC 3</fullName>
    </recommendedName>
</protein>
<proteinExistence type="inferred from homology"/>
<accession>Q8FVM0</accession>
<accession>G0KDI0</accession>
<organism>
    <name type="scientific">Brucella suis biovar 1 (strain 1330)</name>
    <dbReference type="NCBI Taxonomy" id="204722"/>
    <lineage>
        <taxon>Bacteria</taxon>
        <taxon>Pseudomonadati</taxon>
        <taxon>Pseudomonadota</taxon>
        <taxon>Alphaproteobacteria</taxon>
        <taxon>Hyphomicrobiales</taxon>
        <taxon>Brucellaceae</taxon>
        <taxon>Brucella/Ochrobactrum group</taxon>
        <taxon>Brucella</taxon>
    </lineage>
</organism>
<dbReference type="EMBL" id="AE014292">
    <property type="protein sequence ID" value="AAN33992.1"/>
    <property type="molecule type" value="Genomic_DNA"/>
</dbReference>
<dbReference type="EMBL" id="CP002998">
    <property type="protein sequence ID" value="AEM20268.1"/>
    <property type="molecule type" value="Genomic_DNA"/>
</dbReference>
<dbReference type="SMR" id="Q8FVM0"/>
<dbReference type="KEGG" id="bms:BRA0817"/>
<dbReference type="KEGG" id="bsi:BS1330_II0810"/>
<dbReference type="PATRIC" id="fig|204722.21.peg.3548"/>
<dbReference type="HOGENOM" id="CLU_114342_3_0_5"/>
<dbReference type="PhylomeDB" id="Q8FVM0"/>
<dbReference type="Proteomes" id="UP000007104">
    <property type="component" value="Chromosome II"/>
</dbReference>
<dbReference type="GO" id="GO:0005886">
    <property type="term" value="C:plasma membrane"/>
    <property type="evidence" value="ECO:0007669"/>
    <property type="project" value="UniProtKB-SubCell"/>
</dbReference>
<dbReference type="GO" id="GO:0062054">
    <property type="term" value="F:fluoride channel activity"/>
    <property type="evidence" value="ECO:0007669"/>
    <property type="project" value="UniProtKB-UniRule"/>
</dbReference>
<dbReference type="GO" id="GO:0046872">
    <property type="term" value="F:metal ion binding"/>
    <property type="evidence" value="ECO:0007669"/>
    <property type="project" value="UniProtKB-KW"/>
</dbReference>
<dbReference type="GO" id="GO:0140114">
    <property type="term" value="P:cellular detoxification of fluoride"/>
    <property type="evidence" value="ECO:0007669"/>
    <property type="project" value="UniProtKB-UniRule"/>
</dbReference>
<dbReference type="HAMAP" id="MF_00454">
    <property type="entry name" value="FluC"/>
    <property type="match status" value="1"/>
</dbReference>
<dbReference type="InterPro" id="IPR003691">
    <property type="entry name" value="FluC"/>
</dbReference>
<dbReference type="NCBIfam" id="NF010829">
    <property type="entry name" value="PRK14233.1"/>
    <property type="match status" value="1"/>
</dbReference>
<dbReference type="PANTHER" id="PTHR28259">
    <property type="entry name" value="FLUORIDE EXPORT PROTEIN 1-RELATED"/>
    <property type="match status" value="1"/>
</dbReference>
<dbReference type="PANTHER" id="PTHR28259:SF1">
    <property type="entry name" value="FLUORIDE EXPORT PROTEIN 1-RELATED"/>
    <property type="match status" value="1"/>
</dbReference>
<dbReference type="Pfam" id="PF02537">
    <property type="entry name" value="CRCB"/>
    <property type="match status" value="1"/>
</dbReference>
<evidence type="ECO:0000255" key="1">
    <source>
        <dbReference type="HAMAP-Rule" id="MF_00454"/>
    </source>
</evidence>